<sequence length="415" mass="45639">MIRVMAGAKFLNGMVKVAEDAYLFHVIHSKSLAVLMGTADSDVPLPLLFSKFPGSPTNAIPLYCYERPRLSLARLILSGHPYALHSELEIGFSDAGGEITVYRCPIVKYTDFRDEPVKADCTLMFSSREDMSDATPLTEDLYPRIGSRCKIKHVTIDESKNQSFFFDKDAAIRAPAPCSPAPCSPAPGSPPPPAPPAAPAKPIIKCQLEPADEELARFTGYARIFHAISTHSPKIGSCGAASYNTVLIMTRSQNSLRVLPRDGSITPRHNLFLKHVILKEMGLENSVQDFEVLYGDHLGPVTRQQAEEFRETVRGLRCKLEDCVFVLNSVCAAPFSKPVAAGSTGPHTLLLLEKYFLTFNPRDKANAINFGAAVTELIFGGVPFTKILAFVQKFIEILTETPEDNMFKIYALLTN</sequence>
<name>VG23_EHV2</name>
<protein>
    <recommendedName>
        <fullName>Uncharacterized gene 23 protein</fullName>
    </recommendedName>
</protein>
<evidence type="ECO:0000256" key="1">
    <source>
        <dbReference type="SAM" id="MobiDB-lite"/>
    </source>
</evidence>
<evidence type="ECO:0000305" key="2"/>
<feature type="chain" id="PRO_0000406018" description="Uncharacterized gene 23 protein">
    <location>
        <begin position="1"/>
        <end position="415"/>
    </location>
</feature>
<feature type="region of interest" description="Disordered" evidence="1">
    <location>
        <begin position="179"/>
        <end position="200"/>
    </location>
</feature>
<feature type="compositionally biased region" description="Pro residues" evidence="1">
    <location>
        <begin position="179"/>
        <end position="199"/>
    </location>
</feature>
<reference key="1">
    <citation type="journal article" date="1995" name="J. Mol. Biol.">
        <title>The DNA sequence of equine herpesvirus 2.</title>
        <authorList>
            <person name="Telford E.A.R."/>
            <person name="Watson M.S."/>
            <person name="Aird H.C."/>
            <person name="Perry J."/>
            <person name="Davison A.J."/>
        </authorList>
    </citation>
    <scope>NUCLEOTIDE SEQUENCE [LARGE SCALE GENOMIC DNA]</scope>
</reference>
<comment type="similarity">
    <text evidence="2">Belongs to the herpesviridae BTRF1 family.</text>
</comment>
<organismHost>
    <name type="scientific">Equus caballus</name>
    <name type="common">Horse</name>
    <dbReference type="NCBI Taxonomy" id="9796"/>
</organismHost>
<dbReference type="EMBL" id="U20824">
    <property type="protein sequence ID" value="AAC13810.1"/>
    <property type="molecule type" value="Genomic_DNA"/>
</dbReference>
<dbReference type="PIR" id="S55617">
    <property type="entry name" value="S55617"/>
</dbReference>
<dbReference type="KEGG" id="vg:1461083"/>
<dbReference type="Proteomes" id="UP000007083">
    <property type="component" value="Segment"/>
</dbReference>
<dbReference type="InterPro" id="IPR006772">
    <property type="entry name" value="Herpes_BTRF1"/>
</dbReference>
<dbReference type="Pfam" id="PF04682">
    <property type="entry name" value="Herpes_BTRF1"/>
    <property type="match status" value="1"/>
</dbReference>
<organism>
    <name type="scientific">Equine herpesvirus 2 (strain 86/87)</name>
    <name type="common">EHV-2</name>
    <dbReference type="NCBI Taxonomy" id="82831"/>
    <lineage>
        <taxon>Viruses</taxon>
        <taxon>Duplodnaviria</taxon>
        <taxon>Heunggongvirae</taxon>
        <taxon>Peploviricota</taxon>
        <taxon>Herviviricetes</taxon>
        <taxon>Herpesvirales</taxon>
        <taxon>Orthoherpesviridae</taxon>
        <taxon>Gammaherpesvirinae</taxon>
        <taxon>Percavirus</taxon>
        <taxon>Percavirus equidgamma2</taxon>
        <taxon>Equid gammaherpesvirus 2</taxon>
    </lineage>
</organism>
<accession>Q66626</accession>
<keyword id="KW-1185">Reference proteome</keyword>
<gene>
    <name type="primary">23</name>
</gene>
<proteinExistence type="inferred from homology"/>